<keyword id="KW-0479">Metal-binding</keyword>
<keyword id="KW-1185">Reference proteome</keyword>
<keyword id="KW-0862">Zinc</keyword>
<feature type="chain" id="PRO_0000211729" description="DNA gyrase inhibitor YacG">
    <location>
        <begin position="1"/>
        <end position="69"/>
    </location>
</feature>
<feature type="region of interest" description="Disordered" evidence="2">
    <location>
        <begin position="46"/>
        <end position="69"/>
    </location>
</feature>
<feature type="compositionally biased region" description="Acidic residues" evidence="2">
    <location>
        <begin position="59"/>
        <end position="69"/>
    </location>
</feature>
<feature type="binding site" evidence="1">
    <location>
        <position position="14"/>
    </location>
    <ligand>
        <name>Zn(2+)</name>
        <dbReference type="ChEBI" id="CHEBI:29105"/>
    </ligand>
</feature>
<feature type="binding site" evidence="1">
    <location>
        <position position="17"/>
    </location>
    <ligand>
        <name>Zn(2+)</name>
        <dbReference type="ChEBI" id="CHEBI:29105"/>
    </ligand>
</feature>
<feature type="binding site" evidence="1">
    <location>
        <position position="33"/>
    </location>
    <ligand>
        <name>Zn(2+)</name>
        <dbReference type="ChEBI" id="CHEBI:29105"/>
    </ligand>
</feature>
<feature type="binding site" evidence="1">
    <location>
        <position position="37"/>
    </location>
    <ligand>
        <name>Zn(2+)</name>
        <dbReference type="ChEBI" id="CHEBI:29105"/>
    </ligand>
</feature>
<protein>
    <recommendedName>
        <fullName evidence="1">DNA gyrase inhibitor YacG</fullName>
    </recommendedName>
</protein>
<name>YACG_ALIF1</name>
<comment type="function">
    <text evidence="1">Inhibits all the catalytic activities of DNA gyrase by preventing its interaction with DNA. Acts by binding directly to the C-terminal domain of GyrB, which probably disrupts DNA binding by the gyrase.</text>
</comment>
<comment type="cofactor">
    <cofactor evidence="1">
        <name>Zn(2+)</name>
        <dbReference type="ChEBI" id="CHEBI:29105"/>
    </cofactor>
    <text evidence="1">Binds 1 zinc ion.</text>
</comment>
<comment type="subunit">
    <text evidence="1">Interacts with GyrB.</text>
</comment>
<comment type="similarity">
    <text evidence="1">Belongs to the DNA gyrase inhibitor YacG family.</text>
</comment>
<gene>
    <name evidence="1" type="primary">yacG</name>
    <name type="ordered locus">VF_2191</name>
</gene>
<proteinExistence type="inferred from homology"/>
<reference key="1">
    <citation type="journal article" date="2005" name="Proc. Natl. Acad. Sci. U.S.A.">
        <title>Complete genome sequence of Vibrio fischeri: a symbiotic bacterium with pathogenic congeners.</title>
        <authorList>
            <person name="Ruby E.G."/>
            <person name="Urbanowski M."/>
            <person name="Campbell J."/>
            <person name="Dunn A."/>
            <person name="Faini M."/>
            <person name="Gunsalus R."/>
            <person name="Lostroh P."/>
            <person name="Lupp C."/>
            <person name="McCann J."/>
            <person name="Millikan D."/>
            <person name="Schaefer A."/>
            <person name="Stabb E."/>
            <person name="Stevens A."/>
            <person name="Visick K."/>
            <person name="Whistler C."/>
            <person name="Greenberg E.P."/>
        </authorList>
    </citation>
    <scope>NUCLEOTIDE SEQUENCE [LARGE SCALE GENOMIC DNA]</scope>
    <source>
        <strain>ATCC 700601 / ES114</strain>
    </source>
</reference>
<sequence length="69" mass="7766">MTKPTTEQPTTVKCPTCQSAVIWNAESPFRPFCSKKCQMIDFGEWADEEKSIPGAPDMSDSDGWSEDQY</sequence>
<evidence type="ECO:0000255" key="1">
    <source>
        <dbReference type="HAMAP-Rule" id="MF_00649"/>
    </source>
</evidence>
<evidence type="ECO:0000256" key="2">
    <source>
        <dbReference type="SAM" id="MobiDB-lite"/>
    </source>
</evidence>
<accession>Q5E2R0</accession>
<dbReference type="EMBL" id="CP000020">
    <property type="protein sequence ID" value="AAW86686.1"/>
    <property type="molecule type" value="Genomic_DNA"/>
</dbReference>
<dbReference type="RefSeq" id="WP_011262627.1">
    <property type="nucleotide sequence ID" value="NC_006840.2"/>
</dbReference>
<dbReference type="RefSeq" id="YP_205574.1">
    <property type="nucleotide sequence ID" value="NC_006840.2"/>
</dbReference>
<dbReference type="SMR" id="Q5E2R0"/>
<dbReference type="STRING" id="312309.VF_2191"/>
<dbReference type="EnsemblBacteria" id="AAW86686">
    <property type="protein sequence ID" value="AAW86686"/>
    <property type="gene ID" value="VF_2191"/>
</dbReference>
<dbReference type="GeneID" id="54164908"/>
<dbReference type="KEGG" id="vfi:VF_2191"/>
<dbReference type="PATRIC" id="fig|312309.11.peg.2231"/>
<dbReference type="eggNOG" id="COG3024">
    <property type="taxonomic scope" value="Bacteria"/>
</dbReference>
<dbReference type="HOGENOM" id="CLU_178280_3_1_6"/>
<dbReference type="OrthoDB" id="9809663at2"/>
<dbReference type="Proteomes" id="UP000000537">
    <property type="component" value="Chromosome I"/>
</dbReference>
<dbReference type="GO" id="GO:0008657">
    <property type="term" value="F:DNA topoisomerase type II (double strand cut, ATP-hydrolyzing) inhibitor activity"/>
    <property type="evidence" value="ECO:0007669"/>
    <property type="project" value="UniProtKB-UniRule"/>
</dbReference>
<dbReference type="GO" id="GO:0008270">
    <property type="term" value="F:zinc ion binding"/>
    <property type="evidence" value="ECO:0007669"/>
    <property type="project" value="UniProtKB-UniRule"/>
</dbReference>
<dbReference type="GO" id="GO:0006355">
    <property type="term" value="P:regulation of DNA-templated transcription"/>
    <property type="evidence" value="ECO:0007669"/>
    <property type="project" value="InterPro"/>
</dbReference>
<dbReference type="Gene3D" id="3.30.50.10">
    <property type="entry name" value="Erythroid Transcription Factor GATA-1, subunit A"/>
    <property type="match status" value="1"/>
</dbReference>
<dbReference type="HAMAP" id="MF_00649">
    <property type="entry name" value="DNA_gyrase_inhibitor_YacG"/>
    <property type="match status" value="1"/>
</dbReference>
<dbReference type="InterPro" id="IPR005584">
    <property type="entry name" value="DNA_gyrase_inhibitor_YacG"/>
</dbReference>
<dbReference type="InterPro" id="IPR013088">
    <property type="entry name" value="Znf_NHR/GATA"/>
</dbReference>
<dbReference type="NCBIfam" id="NF001638">
    <property type="entry name" value="PRK00418.1"/>
    <property type="match status" value="1"/>
</dbReference>
<dbReference type="PANTHER" id="PTHR36150">
    <property type="entry name" value="DNA GYRASE INHIBITOR YACG"/>
    <property type="match status" value="1"/>
</dbReference>
<dbReference type="PANTHER" id="PTHR36150:SF1">
    <property type="entry name" value="DNA GYRASE INHIBITOR YACG"/>
    <property type="match status" value="1"/>
</dbReference>
<dbReference type="Pfam" id="PF03884">
    <property type="entry name" value="YacG"/>
    <property type="match status" value="1"/>
</dbReference>
<dbReference type="SUPFAM" id="SSF57716">
    <property type="entry name" value="Glucocorticoid receptor-like (DNA-binding domain)"/>
    <property type="match status" value="1"/>
</dbReference>
<organism>
    <name type="scientific">Aliivibrio fischeri (strain ATCC 700601 / ES114)</name>
    <name type="common">Vibrio fischeri</name>
    <dbReference type="NCBI Taxonomy" id="312309"/>
    <lineage>
        <taxon>Bacteria</taxon>
        <taxon>Pseudomonadati</taxon>
        <taxon>Pseudomonadota</taxon>
        <taxon>Gammaproteobacteria</taxon>
        <taxon>Vibrionales</taxon>
        <taxon>Vibrionaceae</taxon>
        <taxon>Aliivibrio</taxon>
    </lineage>
</organism>